<accession>G7WMP8</accession>
<sequence>MSYGLDSGDVLEAEDPFIILLVEDNNAHAMLIMRAFERLGFTGRIEWLRDGKAALDYLRLHEGGGRSLPRMVLLDLRLPKVDGHEVLSQIKRSERLRAIPVVVLTTSTSDDDLRRAYSNHVNSYLIKPLSFEDLKRTVEEIKEYWLGWNRSPGPA</sequence>
<keyword id="KW-0597">Phosphoprotein</keyword>
<keyword id="KW-1185">Reference proteome</keyword>
<keyword id="KW-0804">Transcription</keyword>
<keyword id="KW-0805">Transcription regulation</keyword>
<keyword id="KW-0902">Two-component regulatory system</keyword>
<dbReference type="EMBL" id="CP003117">
    <property type="protein sequence ID" value="AET63832.1"/>
    <property type="molecule type" value="Genomic_DNA"/>
</dbReference>
<dbReference type="RefSeq" id="WP_014586017.1">
    <property type="nucleotide sequence ID" value="NC_017527.1"/>
</dbReference>
<dbReference type="SMR" id="G7WMP8"/>
<dbReference type="STRING" id="1110509.Mhar_0447"/>
<dbReference type="GeneID" id="12509616"/>
<dbReference type="KEGG" id="mhi:Mhar_0447"/>
<dbReference type="PATRIC" id="fig|1110509.7.peg.499"/>
<dbReference type="HOGENOM" id="CLU_000445_69_17_2"/>
<dbReference type="Proteomes" id="UP000005877">
    <property type="component" value="Chromosome"/>
</dbReference>
<dbReference type="GO" id="GO:0000160">
    <property type="term" value="P:phosphorelay signal transduction system"/>
    <property type="evidence" value="ECO:0007669"/>
    <property type="project" value="UniProtKB-KW"/>
</dbReference>
<dbReference type="CDD" id="cd17557">
    <property type="entry name" value="REC_Rcp-like"/>
    <property type="match status" value="1"/>
</dbReference>
<dbReference type="Gene3D" id="3.40.50.2300">
    <property type="match status" value="1"/>
</dbReference>
<dbReference type="InterPro" id="IPR011006">
    <property type="entry name" value="CheY-like_superfamily"/>
</dbReference>
<dbReference type="InterPro" id="IPR001789">
    <property type="entry name" value="Sig_transdc_resp-reg_receiver"/>
</dbReference>
<dbReference type="InterPro" id="IPR052893">
    <property type="entry name" value="TCS_response_regulator"/>
</dbReference>
<dbReference type="PANTHER" id="PTHR44520">
    <property type="entry name" value="RESPONSE REGULATOR RCP1-RELATED"/>
    <property type="match status" value="1"/>
</dbReference>
<dbReference type="Pfam" id="PF00072">
    <property type="entry name" value="Response_reg"/>
    <property type="match status" value="1"/>
</dbReference>
<dbReference type="SMART" id="SM00448">
    <property type="entry name" value="REC"/>
    <property type="match status" value="1"/>
</dbReference>
<dbReference type="SUPFAM" id="SSF52172">
    <property type="entry name" value="CheY-like"/>
    <property type="match status" value="1"/>
</dbReference>
<dbReference type="PROSITE" id="PS50110">
    <property type="entry name" value="RESPONSE_REGULATORY"/>
    <property type="match status" value="1"/>
</dbReference>
<reference key="1">
    <citation type="journal article" date="2012" name="PLoS ONE">
        <title>The genome characteristics and predicted function of methyl-group oxidation pathway in the obligate aceticlastic methanogens, Methanosaeta spp.</title>
        <authorList>
            <person name="Zhu J."/>
            <person name="Zheng H."/>
            <person name="Ai G."/>
            <person name="Zhang G."/>
            <person name="Liu D."/>
            <person name="Liu X."/>
            <person name="Dong X."/>
        </authorList>
    </citation>
    <scope>NUCLEOTIDE SEQUENCE [LARGE SCALE GENOMIC DNA]</scope>
    <source>
        <strain>6Ac</strain>
    </source>
</reference>
<reference key="2">
    <citation type="journal article" date="2014" name="PLoS ONE">
        <title>Characterization of an archaeal two-component system that regulates methanogenesis in Methanosaeta harundinacea.</title>
        <authorList>
            <person name="Li J."/>
            <person name="Zheng X."/>
            <person name="Guo X."/>
            <person name="Qi L."/>
            <person name="Dong X."/>
        </authorList>
    </citation>
    <scope>FUNCTION</scope>
    <scope>INDUCTION</scope>
    <scope>PHOSPHORYLATION</scope>
    <source>
        <strain>6Ac</strain>
    </source>
</reference>
<proteinExistence type="evidence at protein level"/>
<protein>
    <recommendedName>
        <fullName evidence="4">Probable methanogenesis regulatory protein FilR2</fullName>
    </recommendedName>
</protein>
<organism>
    <name type="scientific">Methanothrix harundinacea (strain 6Ac)</name>
    <name type="common">Methanosaeta harundinacea</name>
    <dbReference type="NCBI Taxonomy" id="1110509"/>
    <lineage>
        <taxon>Archaea</taxon>
        <taxon>Methanobacteriati</taxon>
        <taxon>Methanobacteriota</taxon>
        <taxon>Stenosarchaea group</taxon>
        <taxon>Methanomicrobia</taxon>
        <taxon>Methanotrichales</taxon>
        <taxon>Methanotrichaceae</taxon>
        <taxon>Methanothrix</taxon>
    </lineage>
</organism>
<feature type="chain" id="PRO_0000433372" description="Probable methanogenesis regulatory protein FilR2">
    <location>
        <begin position="1"/>
        <end position="155"/>
    </location>
</feature>
<feature type="domain" description="Response regulatory" evidence="1">
    <location>
        <begin position="18"/>
        <end position="142"/>
    </location>
</feature>
<feature type="modified residue" description="4-aspartylphosphate" evidence="1">
    <location>
        <position position="75"/>
    </location>
</feature>
<comment type="function">
    <text evidence="2">Member of the two-component regulatory system FilI/FilRs, which is involved in the regulation of methanogenesis.</text>
</comment>
<comment type="induction">
    <text evidence="2">Transcriptionally regulated by FilR1.</text>
</comment>
<comment type="PTM">
    <text evidence="2">Phosphorylated by FilI.</text>
</comment>
<evidence type="ECO:0000255" key="1">
    <source>
        <dbReference type="PROSITE-ProRule" id="PRU00169"/>
    </source>
</evidence>
<evidence type="ECO:0000269" key="2">
    <source>
    </source>
</evidence>
<evidence type="ECO:0000303" key="3">
    <source>
    </source>
</evidence>
<evidence type="ECO:0000305" key="4"/>
<evidence type="ECO:0000312" key="5">
    <source>
        <dbReference type="EMBL" id="AET63832.1"/>
    </source>
</evidence>
<name>FILR2_METH6</name>
<gene>
    <name evidence="3" type="primary">filR2</name>
    <name evidence="5" type="ordered locus">Mhar_0447</name>
</gene>